<reference key="1">
    <citation type="journal article" date="2001" name="Nature">
        <title>Genome sequence of Yersinia pestis, the causative agent of plague.</title>
        <authorList>
            <person name="Parkhill J."/>
            <person name="Wren B.W."/>
            <person name="Thomson N.R."/>
            <person name="Titball R.W."/>
            <person name="Holden M.T.G."/>
            <person name="Prentice M.B."/>
            <person name="Sebaihia M."/>
            <person name="James K.D."/>
            <person name="Churcher C.M."/>
            <person name="Mungall K.L."/>
            <person name="Baker S."/>
            <person name="Basham D."/>
            <person name="Bentley S.D."/>
            <person name="Brooks K."/>
            <person name="Cerdeno-Tarraga A.-M."/>
            <person name="Chillingworth T."/>
            <person name="Cronin A."/>
            <person name="Davies R.M."/>
            <person name="Davis P."/>
            <person name="Dougan G."/>
            <person name="Feltwell T."/>
            <person name="Hamlin N."/>
            <person name="Holroyd S."/>
            <person name="Jagels K."/>
            <person name="Karlyshev A.V."/>
            <person name="Leather S."/>
            <person name="Moule S."/>
            <person name="Oyston P.C.F."/>
            <person name="Quail M.A."/>
            <person name="Rutherford K.M."/>
            <person name="Simmonds M."/>
            <person name="Skelton J."/>
            <person name="Stevens K."/>
            <person name="Whitehead S."/>
            <person name="Barrell B.G."/>
        </authorList>
    </citation>
    <scope>NUCLEOTIDE SEQUENCE [LARGE SCALE GENOMIC DNA]</scope>
    <source>
        <strain>CO-92 / Biovar Orientalis</strain>
    </source>
</reference>
<reference key="2">
    <citation type="journal article" date="2002" name="J. Bacteriol.">
        <title>Genome sequence of Yersinia pestis KIM.</title>
        <authorList>
            <person name="Deng W."/>
            <person name="Burland V."/>
            <person name="Plunkett G. III"/>
            <person name="Boutin A."/>
            <person name="Mayhew G.F."/>
            <person name="Liss P."/>
            <person name="Perna N.T."/>
            <person name="Rose D.J."/>
            <person name="Mau B."/>
            <person name="Zhou S."/>
            <person name="Schwartz D.C."/>
            <person name="Fetherston J.D."/>
            <person name="Lindler L.E."/>
            <person name="Brubaker R.R."/>
            <person name="Plano G.V."/>
            <person name="Straley S.C."/>
            <person name="McDonough K.A."/>
            <person name="Nilles M.L."/>
            <person name="Matson J.S."/>
            <person name="Blattner F.R."/>
            <person name="Perry R.D."/>
        </authorList>
    </citation>
    <scope>NUCLEOTIDE SEQUENCE [LARGE SCALE GENOMIC DNA]</scope>
    <source>
        <strain>KIM10+ / Biovar Mediaevalis</strain>
    </source>
</reference>
<reference key="3">
    <citation type="journal article" date="2004" name="DNA Res.">
        <title>Complete genome sequence of Yersinia pestis strain 91001, an isolate avirulent to humans.</title>
        <authorList>
            <person name="Song Y."/>
            <person name="Tong Z."/>
            <person name="Wang J."/>
            <person name="Wang L."/>
            <person name="Guo Z."/>
            <person name="Han Y."/>
            <person name="Zhang J."/>
            <person name="Pei D."/>
            <person name="Zhou D."/>
            <person name="Qin H."/>
            <person name="Pang X."/>
            <person name="Han Y."/>
            <person name="Zhai J."/>
            <person name="Li M."/>
            <person name="Cui B."/>
            <person name="Qi Z."/>
            <person name="Jin L."/>
            <person name="Dai R."/>
            <person name="Chen F."/>
            <person name="Li S."/>
            <person name="Ye C."/>
            <person name="Du Z."/>
            <person name="Lin W."/>
            <person name="Wang J."/>
            <person name="Yu J."/>
            <person name="Yang H."/>
            <person name="Wang J."/>
            <person name="Huang P."/>
            <person name="Yang R."/>
        </authorList>
    </citation>
    <scope>NUCLEOTIDE SEQUENCE [LARGE SCALE GENOMIC DNA]</scope>
    <source>
        <strain>91001 / Biovar Mediaevalis</strain>
    </source>
</reference>
<organism>
    <name type="scientific">Yersinia pestis</name>
    <dbReference type="NCBI Taxonomy" id="632"/>
    <lineage>
        <taxon>Bacteria</taxon>
        <taxon>Pseudomonadati</taxon>
        <taxon>Pseudomonadota</taxon>
        <taxon>Gammaproteobacteria</taxon>
        <taxon>Enterobacterales</taxon>
        <taxon>Yersiniaceae</taxon>
        <taxon>Yersinia</taxon>
    </lineage>
</organism>
<feature type="chain" id="PRO_0000105570" description="Flagellar hook-basal body complex protein FliE">
    <location>
        <begin position="1"/>
        <end position="103"/>
    </location>
</feature>
<evidence type="ECO:0000255" key="1">
    <source>
        <dbReference type="HAMAP-Rule" id="MF_00724"/>
    </source>
</evidence>
<evidence type="ECO:0000305" key="2"/>
<keyword id="KW-0975">Bacterial flagellum</keyword>
<keyword id="KW-1185">Reference proteome</keyword>
<dbReference type="EMBL" id="AL590842">
    <property type="protein sequence ID" value="CAL20472.1"/>
    <property type="molecule type" value="Genomic_DNA"/>
</dbReference>
<dbReference type="EMBL" id="AE009952">
    <property type="protein sequence ID" value="AAM86032.1"/>
    <property type="status" value="ALT_INIT"/>
    <property type="molecule type" value="Genomic_DNA"/>
</dbReference>
<dbReference type="EMBL" id="AE017042">
    <property type="protein sequence ID" value="AAS61795.1"/>
    <property type="status" value="ALT_INIT"/>
    <property type="molecule type" value="Genomic_DNA"/>
</dbReference>
<dbReference type="PIR" id="AE0223">
    <property type="entry name" value="AE0223"/>
</dbReference>
<dbReference type="RefSeq" id="WP_002211144.1">
    <property type="nucleotide sequence ID" value="NZ_WUCM01000005.1"/>
</dbReference>
<dbReference type="RefSeq" id="YP_002346827.1">
    <property type="nucleotide sequence ID" value="NC_003143.1"/>
</dbReference>
<dbReference type="SMR" id="Q8ZF85"/>
<dbReference type="STRING" id="214092.YPO1831"/>
<dbReference type="PaxDb" id="214092-YPO1831"/>
<dbReference type="DNASU" id="1147422"/>
<dbReference type="EnsemblBacteria" id="AAS61795">
    <property type="protein sequence ID" value="AAS61795"/>
    <property type="gene ID" value="YP_1561"/>
</dbReference>
<dbReference type="GeneID" id="96665279"/>
<dbReference type="KEGG" id="ype:YPO1831"/>
<dbReference type="KEGG" id="ypk:y2475"/>
<dbReference type="KEGG" id="ypm:YP_1561"/>
<dbReference type="PATRIC" id="fig|1028802.3.peg.1685"/>
<dbReference type="eggNOG" id="COG1677">
    <property type="taxonomic scope" value="Bacteria"/>
</dbReference>
<dbReference type="HOGENOM" id="CLU_147249_0_2_6"/>
<dbReference type="OrthoDB" id="8909229at2"/>
<dbReference type="Proteomes" id="UP000000815">
    <property type="component" value="Chromosome"/>
</dbReference>
<dbReference type="Proteomes" id="UP000001019">
    <property type="component" value="Chromosome"/>
</dbReference>
<dbReference type="Proteomes" id="UP000002490">
    <property type="component" value="Chromosome"/>
</dbReference>
<dbReference type="GO" id="GO:0009425">
    <property type="term" value="C:bacterial-type flagellum basal body"/>
    <property type="evidence" value="ECO:0007669"/>
    <property type="project" value="UniProtKB-SubCell"/>
</dbReference>
<dbReference type="GO" id="GO:0003774">
    <property type="term" value="F:cytoskeletal motor activity"/>
    <property type="evidence" value="ECO:0007669"/>
    <property type="project" value="InterPro"/>
</dbReference>
<dbReference type="GO" id="GO:0005198">
    <property type="term" value="F:structural molecule activity"/>
    <property type="evidence" value="ECO:0007669"/>
    <property type="project" value="InterPro"/>
</dbReference>
<dbReference type="GO" id="GO:0044780">
    <property type="term" value="P:bacterial-type flagellum assembly"/>
    <property type="evidence" value="ECO:0000318"/>
    <property type="project" value="GO_Central"/>
</dbReference>
<dbReference type="GO" id="GO:0071973">
    <property type="term" value="P:bacterial-type flagellum-dependent cell motility"/>
    <property type="evidence" value="ECO:0007669"/>
    <property type="project" value="InterPro"/>
</dbReference>
<dbReference type="HAMAP" id="MF_00724">
    <property type="entry name" value="FliE"/>
    <property type="match status" value="1"/>
</dbReference>
<dbReference type="InterPro" id="IPR001624">
    <property type="entry name" value="FliE"/>
</dbReference>
<dbReference type="NCBIfam" id="TIGR00205">
    <property type="entry name" value="fliE"/>
    <property type="match status" value="1"/>
</dbReference>
<dbReference type="PANTHER" id="PTHR34653">
    <property type="match status" value="1"/>
</dbReference>
<dbReference type="PANTHER" id="PTHR34653:SF1">
    <property type="entry name" value="FLAGELLAR HOOK-BASAL BODY COMPLEX PROTEIN FLIE"/>
    <property type="match status" value="1"/>
</dbReference>
<dbReference type="Pfam" id="PF02049">
    <property type="entry name" value="FliE"/>
    <property type="match status" value="1"/>
</dbReference>
<dbReference type="PRINTS" id="PR01006">
    <property type="entry name" value="FLGHOOKFLIE"/>
</dbReference>
<sequence length="103" mass="10714">MSVQGIEGVLQQLQVTALQASGSAKTLPAEAGFASELKAAIGKISENQQVARTSAQNFELGVPGVGLNDVMVNAQKSSVSLQLGIQVRNKLVAAYQEVMNMGV</sequence>
<comment type="subcellular location">
    <subcellularLocation>
        <location evidence="1">Bacterial flagellum basal body</location>
    </subcellularLocation>
</comment>
<comment type="similarity">
    <text evidence="1">Belongs to the FliE family.</text>
</comment>
<comment type="sequence caution" evidence="2">
    <conflict type="erroneous initiation">
        <sequence resource="EMBL-CDS" id="AAM86032"/>
    </conflict>
</comment>
<comment type="sequence caution" evidence="2">
    <conflict type="erroneous initiation">
        <sequence resource="EMBL-CDS" id="AAS61795"/>
    </conflict>
</comment>
<accession>Q8ZF85</accession>
<accession>Q0WFW1</accession>
<accession>Q8D0B3</accession>
<protein>
    <recommendedName>
        <fullName evidence="1">Flagellar hook-basal body complex protein FliE</fullName>
    </recommendedName>
</protein>
<gene>
    <name evidence="1" type="primary">fliE</name>
    <name type="ordered locus">YPO1831</name>
    <name type="ordered locus">y2475</name>
    <name type="ordered locus">YP_1561</name>
</gene>
<name>FLIE_YERPE</name>
<proteinExistence type="inferred from homology"/>